<dbReference type="EC" id="2.4.1.-"/>
<dbReference type="EC" id="2.4.1.274" evidence="6"/>
<dbReference type="EMBL" id="AF048687">
    <property type="protein sequence ID" value="AAC24515.1"/>
    <property type="molecule type" value="mRNA"/>
</dbReference>
<dbReference type="RefSeq" id="NP_113928.1">
    <property type="nucleotide sequence ID" value="NM_031740.3"/>
</dbReference>
<dbReference type="SMR" id="O88419"/>
<dbReference type="FunCoup" id="O88419">
    <property type="interactions" value="1339"/>
</dbReference>
<dbReference type="STRING" id="10116.ENSRNOP00000075106"/>
<dbReference type="SwissLipids" id="SLP:000000764"/>
<dbReference type="CAZy" id="GT7">
    <property type="family name" value="Glycosyltransferase Family 7"/>
</dbReference>
<dbReference type="GlyCosmos" id="O88419">
    <property type="glycosylation" value="8 sites, No reported glycans"/>
</dbReference>
<dbReference type="GlyGen" id="O88419">
    <property type="glycosylation" value="8 sites"/>
</dbReference>
<dbReference type="PhosphoSitePlus" id="O88419"/>
<dbReference type="PaxDb" id="10116-ENSRNOP00000021764"/>
<dbReference type="Ensembl" id="ENSRNOT00000111678.1">
    <property type="protein sequence ID" value="ENSRNOP00000082568.1"/>
    <property type="gene ID" value="ENSRNOG00000015895.8"/>
</dbReference>
<dbReference type="GeneID" id="65196"/>
<dbReference type="KEGG" id="rno:65196"/>
<dbReference type="AGR" id="RGD:71046"/>
<dbReference type="CTD" id="9331"/>
<dbReference type="RGD" id="71046">
    <property type="gene designation" value="B4galt6"/>
</dbReference>
<dbReference type="eggNOG" id="KOG3916">
    <property type="taxonomic scope" value="Eukaryota"/>
</dbReference>
<dbReference type="GeneTree" id="ENSGT00940000158138"/>
<dbReference type="InParanoid" id="O88419"/>
<dbReference type="OMA" id="VVWDCII"/>
<dbReference type="OrthoDB" id="10038994at2759"/>
<dbReference type="PhylomeDB" id="O88419"/>
<dbReference type="TreeFam" id="TF312834"/>
<dbReference type="Reactome" id="R-RNO-2022854">
    <property type="pathway name" value="Keratan sulfate biosynthesis"/>
</dbReference>
<dbReference type="Reactome" id="R-RNO-913709">
    <property type="pathway name" value="O-linked glycosylation of mucins"/>
</dbReference>
<dbReference type="Reactome" id="R-RNO-975577">
    <property type="pathway name" value="N-Glycan antennae elongation"/>
</dbReference>
<dbReference type="Reactome" id="R-RNO-9840309">
    <property type="pathway name" value="Glycosphingolipid biosynthesis"/>
</dbReference>
<dbReference type="UniPathway" id="UPA00378"/>
<dbReference type="PRO" id="PR:O88419"/>
<dbReference type="Proteomes" id="UP000002494">
    <property type="component" value="Chromosome 18"/>
</dbReference>
<dbReference type="GO" id="GO:0005794">
    <property type="term" value="C:Golgi apparatus"/>
    <property type="evidence" value="ECO:0000318"/>
    <property type="project" value="GO_Central"/>
</dbReference>
<dbReference type="GO" id="GO:0032580">
    <property type="term" value="C:Golgi cisterna membrane"/>
    <property type="evidence" value="ECO:0007669"/>
    <property type="project" value="UniProtKB-SubCell"/>
</dbReference>
<dbReference type="GO" id="GO:0008378">
    <property type="term" value="F:galactosyltransferase activity"/>
    <property type="evidence" value="ECO:0000266"/>
    <property type="project" value="RGD"/>
</dbReference>
<dbReference type="GO" id="GO:0046872">
    <property type="term" value="F:metal ion binding"/>
    <property type="evidence" value="ECO:0007669"/>
    <property type="project" value="UniProtKB-KW"/>
</dbReference>
<dbReference type="GO" id="GO:0008489">
    <property type="term" value="F:UDP-galactose:glucosylceramide beta-1,4-galactosyltransferase activity"/>
    <property type="evidence" value="ECO:0000314"/>
    <property type="project" value="RGD"/>
</dbReference>
<dbReference type="GO" id="GO:0005975">
    <property type="term" value="P:carbohydrate metabolic process"/>
    <property type="evidence" value="ECO:0007669"/>
    <property type="project" value="InterPro"/>
</dbReference>
<dbReference type="GO" id="GO:0022010">
    <property type="term" value="P:central nervous system myelination"/>
    <property type="evidence" value="ECO:0000250"/>
    <property type="project" value="UniProtKB"/>
</dbReference>
<dbReference type="GO" id="GO:0021955">
    <property type="term" value="P:central nervous system neuron axonogenesis"/>
    <property type="evidence" value="ECO:0000250"/>
    <property type="project" value="UniProtKB"/>
</dbReference>
<dbReference type="GO" id="GO:0010706">
    <property type="term" value="P:ganglioside biosynthetic process via lactosylceramide"/>
    <property type="evidence" value="ECO:0000250"/>
    <property type="project" value="UniProtKB"/>
</dbReference>
<dbReference type="GO" id="GO:0006688">
    <property type="term" value="P:glycosphingolipid biosynthetic process"/>
    <property type="evidence" value="ECO:0000314"/>
    <property type="project" value="RGD"/>
</dbReference>
<dbReference type="GO" id="GO:0070085">
    <property type="term" value="P:glycosylation"/>
    <property type="evidence" value="ECO:0000318"/>
    <property type="project" value="GO_Central"/>
</dbReference>
<dbReference type="GO" id="GO:0001572">
    <property type="term" value="P:lactosylceramide biosynthetic process"/>
    <property type="evidence" value="ECO:0000266"/>
    <property type="project" value="RGD"/>
</dbReference>
<dbReference type="GO" id="GO:0042551">
    <property type="term" value="P:neuron maturation"/>
    <property type="evidence" value="ECO:0000250"/>
    <property type="project" value="UniProtKB"/>
</dbReference>
<dbReference type="GO" id="GO:0006486">
    <property type="term" value="P:protein glycosylation"/>
    <property type="evidence" value="ECO:0007669"/>
    <property type="project" value="UniProtKB-UniPathway"/>
</dbReference>
<dbReference type="CDD" id="cd00899">
    <property type="entry name" value="b4GalT"/>
    <property type="match status" value="1"/>
</dbReference>
<dbReference type="FunFam" id="3.90.550.10:FF:000037">
    <property type="entry name" value="Beta-1,4-galactosyltransferase 6"/>
    <property type="match status" value="1"/>
</dbReference>
<dbReference type="Gene3D" id="3.90.550.10">
    <property type="entry name" value="Spore Coat Polysaccharide Biosynthesis Protein SpsA, Chain A"/>
    <property type="match status" value="1"/>
</dbReference>
<dbReference type="InterPro" id="IPR003859">
    <property type="entry name" value="Galactosyl_T"/>
</dbReference>
<dbReference type="InterPro" id="IPR027791">
    <property type="entry name" value="Galactosyl_T_C"/>
</dbReference>
<dbReference type="InterPro" id="IPR027995">
    <property type="entry name" value="Galactosyl_T_N"/>
</dbReference>
<dbReference type="InterPro" id="IPR029044">
    <property type="entry name" value="Nucleotide-diphossugar_trans"/>
</dbReference>
<dbReference type="PANTHER" id="PTHR19300">
    <property type="entry name" value="BETA-1,4-GALACTOSYLTRANSFERASE"/>
    <property type="match status" value="1"/>
</dbReference>
<dbReference type="PANTHER" id="PTHR19300:SF47">
    <property type="entry name" value="BETA-1,4-GALACTOSYLTRANSFERASE 6"/>
    <property type="match status" value="1"/>
</dbReference>
<dbReference type="Pfam" id="PF02709">
    <property type="entry name" value="Glyco_transf_7C"/>
    <property type="match status" value="1"/>
</dbReference>
<dbReference type="Pfam" id="PF13733">
    <property type="entry name" value="Glyco_transf_7N"/>
    <property type="match status" value="1"/>
</dbReference>
<dbReference type="PRINTS" id="PR02050">
    <property type="entry name" value="B14GALTRFASE"/>
</dbReference>
<dbReference type="SUPFAM" id="SSF53448">
    <property type="entry name" value="Nucleotide-diphospho-sugar transferases"/>
    <property type="match status" value="1"/>
</dbReference>
<proteinExistence type="evidence at protein level"/>
<protein>
    <recommendedName>
        <fullName evidence="8">Beta-1,4-galactosyltransferase 6</fullName>
        <shortName>Beta-1,4-GalTase 6</shortName>
        <shortName>Beta4Gal-T6</shortName>
        <shortName>b4Gal-T6</shortName>
        <ecNumber>2.4.1.-</ecNumber>
    </recommendedName>
    <alternativeName>
        <fullName>Glucosylceramide beta-1,4-galactosyltransferase</fullName>
        <ecNumber evidence="6">2.4.1.274</ecNumber>
    </alternativeName>
    <alternativeName>
        <fullName evidence="7">Lactosylceramide synthase</fullName>
        <shortName evidence="7">LacCer synthase</shortName>
    </alternativeName>
    <alternativeName>
        <fullName>UDP-Gal:beta-GlcNAc beta-1,4-galactosyltransferase 6</fullName>
    </alternativeName>
    <alternativeName>
        <fullName evidence="3">UDP-Gal:glucosylceramide beta-1,4-galactosyltransferase</fullName>
    </alternativeName>
    <alternativeName>
        <fullName>UDP-galactose:beta-N-acetylglucosamine beta-1,4-galactosyltransferase 6</fullName>
    </alternativeName>
</protein>
<name>B4GT6_RAT</name>
<accession>O88419</accession>
<gene>
    <name evidence="9" type="primary">B4galt6</name>
</gene>
<reference key="1">
    <citation type="journal article" date="1998" name="J. Biol. Chem.">
        <title>Purification, cDNA cloning, and expression of UDP-Gal: glucosylceramide beta-1,4-galactosyltransferase from rat brain.</title>
        <authorList>
            <person name="Nomura T."/>
            <person name="Takizawa M."/>
            <person name="Aoki J."/>
            <person name="Arai H."/>
            <person name="Inoue K."/>
            <person name="Wakisaka E."/>
            <person name="Yoshizuka N."/>
            <person name="Imokawa G."/>
            <person name="Dohmae N."/>
            <person name="Takio K."/>
            <person name="Hattori M."/>
            <person name="Matsuo N."/>
        </authorList>
    </citation>
    <scope>NUCLEOTIDE SEQUENCE [MRNA]</scope>
    <scope>PROTEIN SEQUENCE OF 256-279; 318-336 AND 343-358</scope>
    <scope>FUNCTION AS GLUCOSYLCERAMIDE BETA-1,4-GALACTOSYLTRANSFERASE</scope>
    <scope>CATALYTIC ACTIVITY</scope>
    <scope>COFACTOR</scope>
    <scope>TISSUE SPECIFICITY</scope>
    <scope>ACTIVITY REGULATION</scope>
    <scope>BIOPHYSICOCHEMICAL PROPERTIES</scope>
    <source>
        <strain>Sprague-Dawley</strain>
        <tissue>Brain</tissue>
    </source>
</reference>
<comment type="function">
    <text evidence="4 6">Catalyzes the synthesis of lactosylceramide (LacCer) via the transfer of galactose from UDP-galactose to glucosylceramide (GlcCer) (PubMed:9593693). LacCer is the starting point in the biosynthesis of all gangliosides (membrane-bound glycosphingolipids) which play pivotal roles in the CNS including neuronal maturation and axonal and myelin formation (By similarity).</text>
</comment>
<comment type="catalytic activity">
    <reaction evidence="6">
        <text>a beta-D-glucosyl-(1&lt;-&gt;1')-N-acylsphing-4-enine + UDP-alpha-D-galactose = a beta-D-Gal-(1-&gt;4)-beta-D-Glc-(1&lt;-&gt;1)-Cer(d18:1(4E)) + UDP + H(+)</text>
        <dbReference type="Rhea" id="RHEA:31495"/>
        <dbReference type="ChEBI" id="CHEBI:15378"/>
        <dbReference type="ChEBI" id="CHEBI:17950"/>
        <dbReference type="ChEBI" id="CHEBI:22801"/>
        <dbReference type="ChEBI" id="CHEBI:58223"/>
        <dbReference type="ChEBI" id="CHEBI:66914"/>
        <dbReference type="EC" id="2.4.1.274"/>
    </reaction>
    <physiologicalReaction direction="left-to-right" evidence="6">
        <dbReference type="Rhea" id="RHEA:31496"/>
    </physiologicalReaction>
</comment>
<comment type="cofactor">
    <cofactor evidence="6">
        <name>Mn(2+)</name>
        <dbReference type="ChEBI" id="CHEBI:29035"/>
    </cofactor>
    <cofactor evidence="6">
        <name>Mg(2+)</name>
        <dbReference type="ChEBI" id="CHEBI:18420"/>
    </cofactor>
    <cofactor evidence="6">
        <name>Ca(2+)</name>
        <dbReference type="ChEBI" id="CHEBI:29108"/>
    </cofactor>
</comment>
<comment type="activity regulation">
    <text evidence="6">Inhibited by EDTA.</text>
</comment>
<comment type="biophysicochemical properties">
    <phDependence>
        <text evidence="6">Optimum pH is 7.2.</text>
    </phDependence>
</comment>
<comment type="pathway">
    <text>Protein modification; protein glycosylation.</text>
</comment>
<comment type="pathway">
    <text>Sphingolipid metabolism.</text>
</comment>
<comment type="subcellular location">
    <subcellularLocation>
        <location evidence="1">Golgi apparatus</location>
        <location evidence="1">Golgi stack membrane</location>
        <topology>Single-pass type II membrane protein</topology>
    </subcellularLocation>
    <text evidence="1">Trans cisternae of Golgi stack.</text>
</comment>
<comment type="tissue specificity">
    <text evidence="6">Highest expression in brain with lower levels found in lungs, heart, skeletal muscle and kidney. Lowest expression in testis, liver and spleen.</text>
</comment>
<comment type="similarity">
    <text evidence="8">Belongs to the glycosyltransferase 7 family.</text>
</comment>
<feature type="chain" id="PRO_0000080549" description="Beta-1,4-galactosyltransferase 6">
    <location>
        <begin position="1"/>
        <end position="382"/>
    </location>
</feature>
<feature type="topological domain" description="Cytoplasmic">
    <location>
        <begin position="1"/>
        <end position="15"/>
    </location>
</feature>
<feature type="transmembrane region" description="Helical; Signal-anchor for type II membrane protein" evidence="5">
    <location>
        <begin position="16"/>
        <end position="35"/>
    </location>
</feature>
<feature type="topological domain" description="Lumenal" evidence="5">
    <location>
        <begin position="36"/>
        <end position="382"/>
    </location>
</feature>
<feature type="binding site" evidence="2">
    <location>
        <begin position="163"/>
        <end position="167"/>
    </location>
    <ligand>
        <name>UDP-alpha-D-galactose</name>
        <dbReference type="ChEBI" id="CHEBI:66914"/>
    </ligand>
</feature>
<feature type="binding site" evidence="2">
    <location>
        <begin position="202"/>
        <end position="204"/>
    </location>
    <ligand>
        <name>UDP-alpha-D-galactose</name>
        <dbReference type="ChEBI" id="CHEBI:66914"/>
    </ligand>
</feature>
<feature type="binding site" evidence="2">
    <location>
        <begin position="229"/>
        <end position="230"/>
    </location>
    <ligand>
        <name>UDP-alpha-D-galactose</name>
        <dbReference type="ChEBI" id="CHEBI:66914"/>
    </ligand>
</feature>
<feature type="binding site" evidence="2">
    <location>
        <position position="230"/>
    </location>
    <ligand>
        <name>Mn(2+)</name>
        <dbReference type="ChEBI" id="CHEBI:29035"/>
    </ligand>
</feature>
<feature type="binding site" evidence="2">
    <location>
        <position position="258"/>
    </location>
    <ligand>
        <name>UDP-alpha-D-galactose</name>
        <dbReference type="ChEBI" id="CHEBI:66914"/>
    </ligand>
</feature>
<feature type="binding site" evidence="2">
    <location>
        <position position="290"/>
    </location>
    <ligand>
        <name>UDP-alpha-D-galactose</name>
        <dbReference type="ChEBI" id="CHEBI:66914"/>
    </ligand>
</feature>
<feature type="binding site" evidence="2">
    <location>
        <begin position="292"/>
        <end position="295"/>
    </location>
    <ligand>
        <name>N-acetyl-D-glucosamine</name>
        <dbReference type="ChEBI" id="CHEBI:506227"/>
    </ligand>
</feature>
<feature type="binding site" evidence="2">
    <location>
        <begin position="323"/>
        <end position="324"/>
    </location>
    <ligand>
        <name>UDP-alpha-D-galactose</name>
        <dbReference type="ChEBI" id="CHEBI:66914"/>
    </ligand>
</feature>
<feature type="binding site" evidence="2">
    <location>
        <position position="323"/>
    </location>
    <ligand>
        <name>Mn(2+)</name>
        <dbReference type="ChEBI" id="CHEBI:29035"/>
    </ligand>
</feature>
<feature type="binding site" evidence="2">
    <location>
        <position position="334"/>
    </location>
    <ligand>
        <name>N-acetyl-D-glucosamine</name>
        <dbReference type="ChEBI" id="CHEBI:506227"/>
    </ligand>
</feature>
<feature type="glycosylation site" description="N-linked (GlcNAc...) asparagine" evidence="5">
    <location>
        <position position="71"/>
    </location>
</feature>
<feature type="glycosylation site" description="N-linked (GlcNAc...) asparagine" evidence="5">
    <location>
        <position position="75"/>
    </location>
</feature>
<feature type="glycosylation site" description="N-linked (GlcNAc...) asparagine" evidence="5">
    <location>
        <position position="83"/>
    </location>
</feature>
<feature type="glycosylation site" description="N-linked (GlcNAc...) asparagine" evidence="5">
    <location>
        <position position="84"/>
    </location>
</feature>
<feature type="glycosylation site" description="N-linked (GlcNAc...) asparagine" evidence="5">
    <location>
        <position position="99"/>
    </location>
</feature>
<feature type="glycosylation site" description="N-linked (GlcNAc...) asparagine" evidence="5">
    <location>
        <position position="122"/>
    </location>
</feature>
<feature type="glycosylation site" description="N-linked (GlcNAc...) asparagine" evidence="5">
    <location>
        <position position="307"/>
    </location>
</feature>
<feature type="glycosylation site" description="N-linked (GlcNAc...) asparagine" evidence="5">
    <location>
        <position position="367"/>
    </location>
</feature>
<feature type="disulfide bond" evidence="1">
    <location>
        <begin position="108"/>
        <end position="152"/>
    </location>
</feature>
<feature type="disulfide bond" evidence="1">
    <location>
        <begin position="223"/>
        <end position="242"/>
    </location>
</feature>
<organism>
    <name type="scientific">Rattus norvegicus</name>
    <name type="common">Rat</name>
    <dbReference type="NCBI Taxonomy" id="10116"/>
    <lineage>
        <taxon>Eukaryota</taxon>
        <taxon>Metazoa</taxon>
        <taxon>Chordata</taxon>
        <taxon>Craniata</taxon>
        <taxon>Vertebrata</taxon>
        <taxon>Euteleostomi</taxon>
        <taxon>Mammalia</taxon>
        <taxon>Eutheria</taxon>
        <taxon>Euarchontoglires</taxon>
        <taxon>Glires</taxon>
        <taxon>Rodentia</taxon>
        <taxon>Myomorpha</taxon>
        <taxon>Muroidea</taxon>
        <taxon>Muridae</taxon>
        <taxon>Murinae</taxon>
        <taxon>Rattus</taxon>
    </lineage>
</organism>
<keyword id="KW-0106">Calcium</keyword>
<keyword id="KW-0903">Direct protein sequencing</keyword>
<keyword id="KW-1015">Disulfide bond</keyword>
<keyword id="KW-0325">Glycoprotein</keyword>
<keyword id="KW-0328">Glycosyltransferase</keyword>
<keyword id="KW-0333">Golgi apparatus</keyword>
<keyword id="KW-0444">Lipid biosynthesis</keyword>
<keyword id="KW-0443">Lipid metabolism</keyword>
<keyword id="KW-0460">Magnesium</keyword>
<keyword id="KW-0464">Manganese</keyword>
<keyword id="KW-0472">Membrane</keyword>
<keyword id="KW-0479">Metal-binding</keyword>
<keyword id="KW-1185">Reference proteome</keyword>
<keyword id="KW-0735">Signal-anchor</keyword>
<keyword id="KW-0746">Sphingolipid metabolism</keyword>
<keyword id="KW-0808">Transferase</keyword>
<keyword id="KW-0812">Transmembrane</keyword>
<keyword id="KW-1133">Transmembrane helix</keyword>
<evidence type="ECO:0000250" key="1">
    <source>
        <dbReference type="UniProtKB" id="P15291"/>
    </source>
</evidence>
<evidence type="ECO:0000250" key="2">
    <source>
        <dbReference type="UniProtKB" id="Q9UBV7"/>
    </source>
</evidence>
<evidence type="ECO:0000250" key="3">
    <source>
        <dbReference type="UniProtKB" id="Q9UBX8"/>
    </source>
</evidence>
<evidence type="ECO:0000250" key="4">
    <source>
        <dbReference type="UniProtKB" id="Q9WVK5"/>
    </source>
</evidence>
<evidence type="ECO:0000255" key="5"/>
<evidence type="ECO:0000269" key="6">
    <source>
    </source>
</evidence>
<evidence type="ECO:0000303" key="7">
    <source>
    </source>
</evidence>
<evidence type="ECO:0000305" key="8"/>
<evidence type="ECO:0000312" key="9">
    <source>
        <dbReference type="RGD" id="71046"/>
    </source>
</evidence>
<sequence length="382" mass="44778">MSALKRMMRVSNRSLIAFIFFFSLSTSCLYFIYVAPGIANTYLFMVQARGIMLRENVKTIGHMIRLYTNKNTTLNGTDYPEGNNTSDYLVQTTTYLPQNFTYSPHLPCPEKLPYMRGFLSVNVSEISFDEVHQLFSKDSEIEPGGHWRPQDCKPRWKVAVLIPFRNRHEHLPIFFLHLIPMLQKQRLEFAFYVIEQTGTQPFNRAMLFNVGFKEAMKDRAWDCVIFHDVDHLPENDRNYYGCGEMPRHFAAKLDKYMYILPYKEFFGGVSGLTVEQFRKINGFPNAFWGWGGEDDDLWNRVHYSGYNVTRPEGDLGKYTSIPHHHRGEVQFLGRYKLLRYSKERQFIDGLNNLLYTPKILVDRLYTNISVNLMPELAPVEDY</sequence>